<sequence>MTNVAVLSESELGSEAQRERRKRILDATLAIASKGGYEAVQMRAVAERADVAVGTLYRYFPSKVHLLVSALGREFERIDAKTDRAALAGGTPYQRLNFMVGKLNRAMQRNPLLTEAMTRAFVFADASAAGEVDHVGKLMDSMFARAMSDGEPTEDQYHIARVISDVWLSNLLAWLTRRASATDVSKRLDLAVRLLIGTEEQPKI</sequence>
<keyword id="KW-0238">DNA-binding</keyword>
<keyword id="KW-1185">Reference proteome</keyword>
<keyword id="KW-0678">Repressor</keyword>
<keyword id="KW-0804">Transcription</keyword>
<keyword id="KW-0805">Transcription regulation</keyword>
<organism>
    <name type="scientific">Mycolicibacterium smegmatis (strain ATCC 700084 / mc(2)155)</name>
    <name type="common">Mycobacterium smegmatis</name>
    <dbReference type="NCBI Taxonomy" id="246196"/>
    <lineage>
        <taxon>Bacteria</taxon>
        <taxon>Bacillati</taxon>
        <taxon>Actinomycetota</taxon>
        <taxon>Actinomycetes</taxon>
        <taxon>Mycobacteriales</taxon>
        <taxon>Mycobacteriaceae</taxon>
        <taxon>Mycolicibacterium</taxon>
    </lineage>
</organism>
<accession>A0R528</accession>
<accession>I7GG00</accession>
<comment type="function">
    <text evidence="2">Controls the expression of genes used for utilizing diverse lipids as energy sources.</text>
</comment>
<comment type="subunit">
    <text evidence="3">Homodimer.</text>
</comment>
<comment type="sequence caution" evidence="3">
    <conflict type="erroneous initiation">
        <sequence resource="EMBL-CDS" id="AFP42314"/>
    </conflict>
    <text>Extended N-terminus.</text>
</comment>
<gene>
    <name type="primary">kstR</name>
    <name type="ordered locus">MSMEG_6042</name>
    <name type="ordered locus">MSMEI_5881</name>
</gene>
<name>KSTR_MYCS2</name>
<protein>
    <recommendedName>
        <fullName>HTH-type transcriptional repressor KstR</fullName>
    </recommendedName>
</protein>
<reference key="1">
    <citation type="submission" date="2006-10" db="EMBL/GenBank/DDBJ databases">
        <authorList>
            <person name="Fleischmann R.D."/>
            <person name="Dodson R.J."/>
            <person name="Haft D.H."/>
            <person name="Merkel J.S."/>
            <person name="Nelson W.C."/>
            <person name="Fraser C.M."/>
        </authorList>
    </citation>
    <scope>NUCLEOTIDE SEQUENCE [LARGE SCALE GENOMIC DNA]</scope>
    <source>
        <strain>ATCC 700084 / mc(2)155</strain>
    </source>
</reference>
<reference key="2">
    <citation type="journal article" date="2007" name="Genome Biol.">
        <title>Interrupted coding sequences in Mycobacterium smegmatis: authentic mutations or sequencing errors?</title>
        <authorList>
            <person name="Deshayes C."/>
            <person name="Perrodou E."/>
            <person name="Gallien S."/>
            <person name="Euphrasie D."/>
            <person name="Schaeffer C."/>
            <person name="Van-Dorsselaer A."/>
            <person name="Poch O."/>
            <person name="Lecompte O."/>
            <person name="Reyrat J.-M."/>
        </authorList>
    </citation>
    <scope>NUCLEOTIDE SEQUENCE [LARGE SCALE GENOMIC DNA]</scope>
    <source>
        <strain>ATCC 700084 / mc(2)155</strain>
    </source>
</reference>
<reference key="3">
    <citation type="journal article" date="2009" name="Genome Res.">
        <title>Ortho-proteogenomics: multiple proteomes investigation through orthology and a new MS-based protocol.</title>
        <authorList>
            <person name="Gallien S."/>
            <person name="Perrodou E."/>
            <person name="Carapito C."/>
            <person name="Deshayes C."/>
            <person name="Reyrat J.-M."/>
            <person name="Van Dorsselaer A."/>
            <person name="Poch O."/>
            <person name="Schaeffer C."/>
            <person name="Lecompte O."/>
        </authorList>
    </citation>
    <scope>NUCLEOTIDE SEQUENCE [LARGE SCALE GENOMIC DNA]</scope>
    <source>
        <strain>ATCC 700084 / mc(2)155</strain>
    </source>
</reference>
<reference key="4">
    <citation type="journal article" date="2007" name="Mol. Microbiol.">
        <title>A highly conserved transcriptional repressor controls a large regulon involved in lipid degradation in Mycobacterium smegmatis and Mycobacterium tuberculosis.</title>
        <authorList>
            <person name="Kendall S.L."/>
            <person name="Withers M."/>
            <person name="Soffair C.N."/>
            <person name="Moreland N.J."/>
            <person name="Gurcha S."/>
            <person name="Sidders B."/>
            <person name="Frita R."/>
            <person name="Ten Bokum A."/>
            <person name="Besra G.S."/>
            <person name="Lott J.S."/>
            <person name="Stoker N.G."/>
        </authorList>
    </citation>
    <scope>FUNCTION AS A TRANSCRIPTIONAL REPRESSOR</scope>
</reference>
<proteinExistence type="evidence at protein level"/>
<dbReference type="EMBL" id="CP000480">
    <property type="protein sequence ID" value="ABK75291.1"/>
    <property type="molecule type" value="Genomic_DNA"/>
</dbReference>
<dbReference type="EMBL" id="CP001663">
    <property type="protein sequence ID" value="AFP42314.1"/>
    <property type="status" value="ALT_INIT"/>
    <property type="molecule type" value="Genomic_DNA"/>
</dbReference>
<dbReference type="RefSeq" id="YP_890266.1">
    <property type="nucleotide sequence ID" value="NC_008596.1"/>
</dbReference>
<dbReference type="SMR" id="A0R528"/>
<dbReference type="STRING" id="246196.MSMEG_6042"/>
<dbReference type="PaxDb" id="246196-MSMEI_5881"/>
<dbReference type="KEGG" id="msg:MSMEI_5881"/>
<dbReference type="KEGG" id="msm:MSMEG_6042"/>
<dbReference type="PATRIC" id="fig|246196.19.peg.5878"/>
<dbReference type="eggNOG" id="COG1309">
    <property type="taxonomic scope" value="Bacteria"/>
</dbReference>
<dbReference type="OrthoDB" id="9809994at2"/>
<dbReference type="Proteomes" id="UP000000757">
    <property type="component" value="Chromosome"/>
</dbReference>
<dbReference type="Proteomes" id="UP000006158">
    <property type="component" value="Chromosome"/>
</dbReference>
<dbReference type="GO" id="GO:0003700">
    <property type="term" value="F:DNA-binding transcription factor activity"/>
    <property type="evidence" value="ECO:0007669"/>
    <property type="project" value="TreeGrafter"/>
</dbReference>
<dbReference type="GO" id="GO:0000976">
    <property type="term" value="F:transcription cis-regulatory region binding"/>
    <property type="evidence" value="ECO:0007669"/>
    <property type="project" value="TreeGrafter"/>
</dbReference>
<dbReference type="GO" id="GO:0006355">
    <property type="term" value="P:regulation of DNA-templated transcription"/>
    <property type="evidence" value="ECO:0000315"/>
    <property type="project" value="UniProtKB"/>
</dbReference>
<dbReference type="FunFam" id="1.10.357.10:FF:000007">
    <property type="entry name" value="TetR family transcriptional regulator"/>
    <property type="match status" value="1"/>
</dbReference>
<dbReference type="Gene3D" id="1.10.357.10">
    <property type="entry name" value="Tetracycline Repressor, domain 2"/>
    <property type="match status" value="1"/>
</dbReference>
<dbReference type="InterPro" id="IPR009057">
    <property type="entry name" value="Homeodomain-like_sf"/>
</dbReference>
<dbReference type="InterPro" id="IPR050109">
    <property type="entry name" value="HTH-type_TetR-like_transc_reg"/>
</dbReference>
<dbReference type="InterPro" id="IPR001647">
    <property type="entry name" value="HTH_TetR"/>
</dbReference>
<dbReference type="InterPro" id="IPR041642">
    <property type="entry name" value="KstR_C"/>
</dbReference>
<dbReference type="NCBIfam" id="NF033703">
    <property type="entry name" value="transcr_KstR"/>
    <property type="match status" value="1"/>
</dbReference>
<dbReference type="PANTHER" id="PTHR30055">
    <property type="entry name" value="HTH-TYPE TRANSCRIPTIONAL REGULATOR RUTR"/>
    <property type="match status" value="1"/>
</dbReference>
<dbReference type="PANTHER" id="PTHR30055:SF242">
    <property type="entry name" value="HTH-TYPE TRANSCRIPTIONAL REPRESSOR KSTR"/>
    <property type="match status" value="1"/>
</dbReference>
<dbReference type="Pfam" id="PF17925">
    <property type="entry name" value="TetR_C_20"/>
    <property type="match status" value="1"/>
</dbReference>
<dbReference type="Pfam" id="PF00440">
    <property type="entry name" value="TetR_N"/>
    <property type="match status" value="1"/>
</dbReference>
<dbReference type="PRINTS" id="PR00455">
    <property type="entry name" value="HTHTETR"/>
</dbReference>
<dbReference type="SUPFAM" id="SSF46689">
    <property type="entry name" value="Homeodomain-like"/>
    <property type="match status" value="1"/>
</dbReference>
<dbReference type="PROSITE" id="PS50977">
    <property type="entry name" value="HTH_TETR_2"/>
    <property type="match status" value="1"/>
</dbReference>
<evidence type="ECO:0000255" key="1">
    <source>
        <dbReference type="PROSITE-ProRule" id="PRU00335"/>
    </source>
</evidence>
<evidence type="ECO:0000269" key="2">
    <source>
    </source>
</evidence>
<evidence type="ECO:0000305" key="3"/>
<feature type="chain" id="PRO_0000405029" description="HTH-type transcriptional repressor KstR">
    <location>
        <begin position="1"/>
        <end position="204"/>
    </location>
</feature>
<feature type="domain" description="HTH tetR-type" evidence="1">
    <location>
        <begin position="18"/>
        <end position="78"/>
    </location>
</feature>
<feature type="DNA-binding region" description="H-T-H motif" evidence="1">
    <location>
        <begin position="41"/>
        <end position="60"/>
    </location>
</feature>